<evidence type="ECO:0000250" key="1"/>
<evidence type="ECO:0000250" key="2">
    <source>
        <dbReference type="UniProtKB" id="Q01959"/>
    </source>
</evidence>
<evidence type="ECO:0000250" key="3">
    <source>
        <dbReference type="UniProtKB" id="Q61327"/>
    </source>
</evidence>
<evidence type="ECO:0000255" key="4"/>
<evidence type="ECO:0000269" key="5">
    <source>
    </source>
</evidence>
<evidence type="ECO:0000269" key="6">
    <source>
    </source>
</evidence>
<evidence type="ECO:0000269" key="7">
    <source>
    </source>
</evidence>
<evidence type="ECO:0000269" key="8">
    <source>
    </source>
</evidence>
<evidence type="ECO:0000269" key="9">
    <source>
    </source>
</evidence>
<evidence type="ECO:0000269" key="10">
    <source>
    </source>
</evidence>
<evidence type="ECO:0000305" key="11"/>
<reference key="1">
    <citation type="journal article" date="1991" name="Science">
        <title>Cloning and expression of a cocaine-sensitive rat dopamine transporter.</title>
        <authorList>
            <person name="Kilty J.E."/>
            <person name="Lorang D."/>
            <person name="Amara S.G."/>
        </authorList>
    </citation>
    <scope>NUCLEOTIDE SEQUENCE [MRNA]</scope>
    <scope>FUNCTION</scope>
    <scope>TRANSPORTER ACTIVITY</scope>
    <scope>BIOPHYSICOCHEMICAL PROPERTIES</scope>
    <scope>ACTIVITY REGULATION</scope>
</reference>
<reference key="2">
    <citation type="journal article" date="1991" name="Science">
        <title>Cloning and expression of a cocaine-sensitive dopamine transporter complementary DNA.</title>
        <authorList>
            <person name="Shimada S."/>
            <person name="Kitayama S."/>
            <person name="Lin C.-L."/>
            <person name="Patel A."/>
            <person name="Nanthakumar E."/>
            <person name="Gregor P."/>
            <person name="Kuhar M."/>
            <person name="Uhl G."/>
        </authorList>
    </citation>
    <scope>NUCLEOTIDE SEQUENCE [MRNA]</scope>
    <scope>FUNCTION</scope>
    <scope>TRANSPORTER ACTIVITY</scope>
    <scope>BIOPHYSICOCHEMICAL PROPERTIES</scope>
    <scope>ACTIVITY REGULATION</scope>
    <scope>TISSUE SPECIFICITY</scope>
</reference>
<reference key="3">
    <citation type="journal article" date="1991" name="FEBS Lett.">
        <title>Cloning and functional characterization of a cocaine-sensitive dopamine transporter.</title>
        <authorList>
            <person name="Giros B."/>
            <person name="el Mestikawy S."/>
            <person name="Bertrand L."/>
            <person name="Caron M.G."/>
        </authorList>
    </citation>
    <scope>NUCLEOTIDE SEQUENCE [MRNA]</scope>
    <scope>FUNCTION</scope>
    <scope>TRANSPORTER ACTIVITY</scope>
    <scope>BIOPHYSICOCHEMICAL PROPERTIES</scope>
    <scope>ACTIVITY REGULATION</scope>
    <scope>TISSUE SPECIFICITY</scope>
</reference>
<reference key="4">
    <citation type="journal article" date="1992" name="Proc. Natl. Acad. Sci. U.S.A.">
        <title>Dopamine transporter site-directed mutations differentially alter substrate transport and cocaine binding.</title>
        <authorList>
            <person name="Kitayama S."/>
            <person name="Shimada S."/>
            <person name="Xu H."/>
            <person name="Markham L."/>
            <person name="Donovan D.M."/>
            <person name="Uhl G."/>
        </authorList>
    </citation>
    <scope>MUTAGENESIS OF ASP-79; SER-356; SER-359; SER-403 AND SER-404</scope>
    <scope>FUNCTION</scope>
    <scope>TRANSPORTER ACTIVITY</scope>
    <scope>BIOPHYSICOCHEMICAL PROPERTIES</scope>
    <scope>ACTIVITY REGULATION</scope>
</reference>
<reference key="5">
    <citation type="journal article" date="1994" name="J. Biol. Chem.">
        <title>Stable expression of biogenic amine transporters reveals differences in inhibitor sensitivity, kinetics, and ion dependence.</title>
        <authorList>
            <person name="Gu H."/>
            <person name="Wall S.C."/>
            <person name="Rudnick G."/>
        </authorList>
    </citation>
    <scope>FUNCTION</scope>
    <scope>TRANSPORTER ACTIVITY</scope>
    <scope>BIOPHYSICOCHEMICAL PROPERTIES</scope>
</reference>
<reference key="6">
    <citation type="journal article" date="2020" name="J. Lipid Res.">
        <title>PLRP2 selectively localizes synaptic membrane proteins via acyl-chain remodeling of phospholipids.</title>
        <authorList>
            <person name="Kuge H."/>
            <person name="Miyamoto I."/>
            <person name="Yagyu K.I."/>
            <person name="Honke K."/>
        </authorList>
    </citation>
    <scope>SUBCELLULAR LOCATION</scope>
</reference>
<accession>P23977</accession>
<protein>
    <recommendedName>
        <fullName>Sodium-dependent dopamine transporter</fullName>
        <shortName>DA transporter</shortName>
        <shortName evidence="2">DAT</shortName>
    </recommendedName>
    <alternativeName>
        <fullName>Solute carrier family 6 member 3</fullName>
    </alternativeName>
</protein>
<dbReference type="EMBL" id="M80233">
    <property type="protein sequence ID" value="AAA41100.1"/>
    <property type="molecule type" value="mRNA"/>
</dbReference>
<dbReference type="EMBL" id="M80570">
    <property type="protein sequence ID" value="AAA73143.1"/>
    <property type="molecule type" value="mRNA"/>
</dbReference>
<dbReference type="EMBL" id="S76145">
    <property type="protein sequence ID" value="AAB21099.1"/>
    <property type="molecule type" value="mRNA"/>
</dbReference>
<dbReference type="PIR" id="I59558">
    <property type="entry name" value="I59558"/>
</dbReference>
<dbReference type="PIR" id="S20346">
    <property type="entry name" value="S20346"/>
</dbReference>
<dbReference type="RefSeq" id="NP_036826.1">
    <property type="nucleotide sequence ID" value="NM_012694.2"/>
</dbReference>
<dbReference type="SMR" id="P23977"/>
<dbReference type="BioGRID" id="247007">
    <property type="interactions" value="5"/>
</dbReference>
<dbReference type="FunCoup" id="P23977">
    <property type="interactions" value="71"/>
</dbReference>
<dbReference type="IntAct" id="P23977">
    <property type="interactions" value="3"/>
</dbReference>
<dbReference type="MINT" id="P23977"/>
<dbReference type="STRING" id="10116.ENSRNOP00000070728"/>
<dbReference type="BindingDB" id="P23977"/>
<dbReference type="ChEMBL" id="CHEMBL338"/>
<dbReference type="DrugCentral" id="P23977"/>
<dbReference type="GuidetoPHARMACOLOGY" id="927"/>
<dbReference type="GlyCosmos" id="P23977">
    <property type="glycosylation" value="4 sites, No reported glycans"/>
</dbReference>
<dbReference type="GlyGen" id="P23977">
    <property type="glycosylation" value="4 sites"/>
</dbReference>
<dbReference type="iPTMnet" id="P23977"/>
<dbReference type="PhosphoSitePlus" id="P23977"/>
<dbReference type="SwissPalm" id="P23977"/>
<dbReference type="PaxDb" id="10116-ENSRNOP00000047272"/>
<dbReference type="Ensembl" id="ENSRNOT00000040291.2">
    <property type="protein sequence ID" value="ENSRNOP00000047272.1"/>
    <property type="gene ID" value="ENSRNOG00000017302.6"/>
</dbReference>
<dbReference type="GeneID" id="24898"/>
<dbReference type="KEGG" id="rno:24898"/>
<dbReference type="UCSC" id="RGD:3715">
    <property type="organism name" value="rat"/>
</dbReference>
<dbReference type="AGR" id="RGD:3715"/>
<dbReference type="CTD" id="6531"/>
<dbReference type="RGD" id="3715">
    <property type="gene designation" value="Slc6a3"/>
</dbReference>
<dbReference type="eggNOG" id="KOG3659">
    <property type="taxonomic scope" value="Eukaryota"/>
</dbReference>
<dbReference type="GeneTree" id="ENSGT00940000161224"/>
<dbReference type="InParanoid" id="P23977"/>
<dbReference type="OMA" id="CEASXDA"/>
<dbReference type="OrthoDB" id="6581954at2759"/>
<dbReference type="PhylomeDB" id="P23977"/>
<dbReference type="TreeFam" id="TF343812"/>
<dbReference type="Reactome" id="R-RNO-379401">
    <property type="pathway name" value="Dopamine clearance from the synaptic cleft"/>
</dbReference>
<dbReference type="Reactome" id="R-RNO-442660">
    <property type="pathway name" value="Na+/Cl- dependent neurotransmitter transporters"/>
</dbReference>
<dbReference type="PRO" id="PR:P23977"/>
<dbReference type="Proteomes" id="UP000002494">
    <property type="component" value="Chromosome 1"/>
</dbReference>
<dbReference type="Bgee" id="ENSRNOG00000017302">
    <property type="expression patterns" value="Expressed in thymus and 1 other cell type or tissue"/>
</dbReference>
<dbReference type="GO" id="GO:0030424">
    <property type="term" value="C:axon"/>
    <property type="evidence" value="ECO:0000266"/>
    <property type="project" value="RGD"/>
</dbReference>
<dbReference type="GO" id="GO:0043679">
    <property type="term" value="C:axon terminus"/>
    <property type="evidence" value="ECO:0000266"/>
    <property type="project" value="RGD"/>
</dbReference>
<dbReference type="GO" id="GO:0009986">
    <property type="term" value="C:cell surface"/>
    <property type="evidence" value="ECO:0000266"/>
    <property type="project" value="RGD"/>
</dbReference>
<dbReference type="GO" id="GO:0098691">
    <property type="term" value="C:dopaminergic synapse"/>
    <property type="evidence" value="ECO:0000314"/>
    <property type="project" value="SynGO"/>
</dbReference>
<dbReference type="GO" id="GO:0016600">
    <property type="term" value="C:flotillin complex"/>
    <property type="evidence" value="ECO:0000266"/>
    <property type="project" value="RGD"/>
</dbReference>
<dbReference type="GO" id="GO:0045121">
    <property type="term" value="C:membrane raft"/>
    <property type="evidence" value="ECO:0000266"/>
    <property type="project" value="RGD"/>
</dbReference>
<dbReference type="GO" id="GO:0043005">
    <property type="term" value="C:neuron projection"/>
    <property type="evidence" value="ECO:0000314"/>
    <property type="project" value="UniProtKB"/>
</dbReference>
<dbReference type="GO" id="GO:0043025">
    <property type="term" value="C:neuronal cell body"/>
    <property type="evidence" value="ECO:0000266"/>
    <property type="project" value="RGD"/>
</dbReference>
<dbReference type="GO" id="GO:0005886">
    <property type="term" value="C:plasma membrane"/>
    <property type="evidence" value="ECO:0000314"/>
    <property type="project" value="UniProtKB"/>
</dbReference>
<dbReference type="GO" id="GO:0045211">
    <property type="term" value="C:postsynaptic membrane"/>
    <property type="evidence" value="ECO:0000314"/>
    <property type="project" value="SynGO"/>
</dbReference>
<dbReference type="GO" id="GO:0042734">
    <property type="term" value="C:presynaptic membrane"/>
    <property type="evidence" value="ECO:0000314"/>
    <property type="project" value="SynGO"/>
</dbReference>
<dbReference type="GO" id="GO:0043176">
    <property type="term" value="F:amine binding"/>
    <property type="evidence" value="ECO:0000314"/>
    <property type="project" value="RGD"/>
</dbReference>
<dbReference type="GO" id="GO:0035240">
    <property type="term" value="F:dopamine binding"/>
    <property type="evidence" value="ECO:0000266"/>
    <property type="project" value="RGD"/>
</dbReference>
<dbReference type="GO" id="GO:0005330">
    <property type="term" value="F:dopamine:sodium symporter activity"/>
    <property type="evidence" value="ECO:0000314"/>
    <property type="project" value="UniProtKB"/>
</dbReference>
<dbReference type="GO" id="GO:1901363">
    <property type="term" value="F:heterocyclic compound binding"/>
    <property type="evidence" value="ECO:0000353"/>
    <property type="project" value="RGD"/>
</dbReference>
<dbReference type="GO" id="GO:0046872">
    <property type="term" value="F:metal ion binding"/>
    <property type="evidence" value="ECO:0007669"/>
    <property type="project" value="UniProtKB-KW"/>
</dbReference>
<dbReference type="GO" id="GO:0008504">
    <property type="term" value="F:monoamine transmembrane transporter activity"/>
    <property type="evidence" value="ECO:0000266"/>
    <property type="project" value="RGD"/>
</dbReference>
<dbReference type="GO" id="GO:0005326">
    <property type="term" value="F:neurotransmitter transmembrane transporter activity"/>
    <property type="evidence" value="ECO:0000266"/>
    <property type="project" value="RGD"/>
</dbReference>
<dbReference type="GO" id="GO:0005334">
    <property type="term" value="F:norepinephrine:sodium symporter activity"/>
    <property type="evidence" value="ECO:0000314"/>
    <property type="project" value="UniProtKB"/>
</dbReference>
<dbReference type="GO" id="GO:0002020">
    <property type="term" value="F:protease binding"/>
    <property type="evidence" value="ECO:0000353"/>
    <property type="project" value="RGD"/>
</dbReference>
<dbReference type="GO" id="GO:0051721">
    <property type="term" value="F:protein phosphatase 2A binding"/>
    <property type="evidence" value="ECO:0000353"/>
    <property type="project" value="RGD"/>
</dbReference>
<dbReference type="GO" id="GO:0044877">
    <property type="term" value="F:protein-containing complex binding"/>
    <property type="evidence" value="ECO:0000314"/>
    <property type="project" value="RGD"/>
</dbReference>
<dbReference type="GO" id="GO:0005102">
    <property type="term" value="F:signaling receptor binding"/>
    <property type="evidence" value="ECO:0000353"/>
    <property type="project" value="RGD"/>
</dbReference>
<dbReference type="GO" id="GO:0021984">
    <property type="term" value="P:adenohypophysis development"/>
    <property type="evidence" value="ECO:0000266"/>
    <property type="project" value="RGD"/>
</dbReference>
<dbReference type="GO" id="GO:0006865">
    <property type="term" value="P:amino acid transport"/>
    <property type="evidence" value="ECO:0000318"/>
    <property type="project" value="GO_Central"/>
</dbReference>
<dbReference type="GO" id="GO:0050890">
    <property type="term" value="P:cognition"/>
    <property type="evidence" value="ECO:0000266"/>
    <property type="project" value="RGD"/>
</dbReference>
<dbReference type="GO" id="GO:0042416">
    <property type="term" value="P:dopamine biosynthetic process"/>
    <property type="evidence" value="ECO:0000266"/>
    <property type="project" value="RGD"/>
</dbReference>
<dbReference type="GO" id="GO:0042420">
    <property type="term" value="P:dopamine catabolic process"/>
    <property type="evidence" value="ECO:0000266"/>
    <property type="project" value="RGD"/>
</dbReference>
<dbReference type="GO" id="GO:0015872">
    <property type="term" value="P:dopamine transport"/>
    <property type="evidence" value="ECO:0000314"/>
    <property type="project" value="RGD"/>
</dbReference>
<dbReference type="GO" id="GO:0090494">
    <property type="term" value="P:dopamine uptake"/>
    <property type="evidence" value="ECO:0000266"/>
    <property type="project" value="RGD"/>
</dbReference>
<dbReference type="GO" id="GO:1990384">
    <property type="term" value="P:hyaloid vascular plexus regression"/>
    <property type="evidence" value="ECO:0000250"/>
    <property type="project" value="UniProtKB"/>
</dbReference>
<dbReference type="GO" id="GO:0007595">
    <property type="term" value="P:lactation"/>
    <property type="evidence" value="ECO:0000266"/>
    <property type="project" value="RGD"/>
</dbReference>
<dbReference type="GO" id="GO:0007626">
    <property type="term" value="P:locomotory behavior"/>
    <property type="evidence" value="ECO:0000266"/>
    <property type="project" value="RGD"/>
</dbReference>
<dbReference type="GO" id="GO:0015844">
    <property type="term" value="P:monoamine transport"/>
    <property type="evidence" value="ECO:0000266"/>
    <property type="project" value="RGD"/>
</dbReference>
<dbReference type="GO" id="GO:0006836">
    <property type="term" value="P:neurotransmitter transport"/>
    <property type="evidence" value="ECO:0000266"/>
    <property type="project" value="RGD"/>
</dbReference>
<dbReference type="GO" id="GO:0001504">
    <property type="term" value="P:neurotransmitter uptake"/>
    <property type="evidence" value="ECO:0000266"/>
    <property type="project" value="RGD"/>
</dbReference>
<dbReference type="GO" id="GO:0040018">
    <property type="term" value="P:positive regulation of multicellular organism growth"/>
    <property type="evidence" value="ECO:0000266"/>
    <property type="project" value="RGD"/>
</dbReference>
<dbReference type="GO" id="GO:0060134">
    <property type="term" value="P:prepulse inhibition"/>
    <property type="evidence" value="ECO:0000266"/>
    <property type="project" value="RGD"/>
</dbReference>
<dbReference type="GO" id="GO:0042053">
    <property type="term" value="P:regulation of dopamine metabolic process"/>
    <property type="evidence" value="ECO:0000266"/>
    <property type="project" value="RGD"/>
</dbReference>
<dbReference type="GO" id="GO:0051591">
    <property type="term" value="P:response to cAMP"/>
    <property type="evidence" value="ECO:0000314"/>
    <property type="project" value="RGD"/>
</dbReference>
<dbReference type="GO" id="GO:0042220">
    <property type="term" value="P:response to cocaine"/>
    <property type="evidence" value="ECO:0000266"/>
    <property type="project" value="RGD"/>
</dbReference>
<dbReference type="GO" id="GO:0045471">
    <property type="term" value="P:response to ethanol"/>
    <property type="evidence" value="ECO:0000314"/>
    <property type="project" value="RGD"/>
</dbReference>
<dbReference type="GO" id="GO:0010039">
    <property type="term" value="P:response to iron ion"/>
    <property type="evidence" value="ECO:0000270"/>
    <property type="project" value="RGD"/>
</dbReference>
<dbReference type="GO" id="GO:0035094">
    <property type="term" value="P:response to nicotine"/>
    <property type="evidence" value="ECO:0000270"/>
    <property type="project" value="RGD"/>
</dbReference>
<dbReference type="GO" id="GO:0009410">
    <property type="term" value="P:response to xenobiotic stimulus"/>
    <property type="evidence" value="ECO:0000270"/>
    <property type="project" value="RGD"/>
</dbReference>
<dbReference type="GO" id="GO:0007608">
    <property type="term" value="P:sensory perception of smell"/>
    <property type="evidence" value="ECO:0000266"/>
    <property type="project" value="RGD"/>
</dbReference>
<dbReference type="GO" id="GO:0035725">
    <property type="term" value="P:sodium ion transmembrane transport"/>
    <property type="evidence" value="ECO:0000318"/>
    <property type="project" value="GO_Central"/>
</dbReference>
<dbReference type="CDD" id="cd11514">
    <property type="entry name" value="SLC6sbd_DAT1"/>
    <property type="match status" value="1"/>
</dbReference>
<dbReference type="InterPro" id="IPR000175">
    <property type="entry name" value="Na/ntran_symport"/>
</dbReference>
<dbReference type="InterPro" id="IPR002436">
    <property type="entry name" value="Na/ntran_symport_dopamine"/>
</dbReference>
<dbReference type="InterPro" id="IPR037272">
    <property type="entry name" value="SNS_sf"/>
</dbReference>
<dbReference type="NCBIfam" id="NF037979">
    <property type="entry name" value="Na_transp"/>
    <property type="match status" value="1"/>
</dbReference>
<dbReference type="PANTHER" id="PTHR11616:SF38">
    <property type="entry name" value="SODIUM-DEPENDENT DOPAMINE TRANSPORTER"/>
    <property type="match status" value="1"/>
</dbReference>
<dbReference type="PANTHER" id="PTHR11616">
    <property type="entry name" value="SODIUM/CHLORIDE DEPENDENT TRANSPORTER"/>
    <property type="match status" value="1"/>
</dbReference>
<dbReference type="Pfam" id="PF00209">
    <property type="entry name" value="SNF"/>
    <property type="match status" value="1"/>
</dbReference>
<dbReference type="PRINTS" id="PR01202">
    <property type="entry name" value="DOPTRANSPORT"/>
</dbReference>
<dbReference type="PRINTS" id="PR00176">
    <property type="entry name" value="NANEUSMPORT"/>
</dbReference>
<dbReference type="SUPFAM" id="SSF161070">
    <property type="entry name" value="SNF-like"/>
    <property type="match status" value="1"/>
</dbReference>
<dbReference type="PROSITE" id="PS00610">
    <property type="entry name" value="NA_NEUROTRAN_SYMP_1"/>
    <property type="match status" value="1"/>
</dbReference>
<dbReference type="PROSITE" id="PS00754">
    <property type="entry name" value="NA_NEUROTRAN_SYMP_2"/>
    <property type="match status" value="1"/>
</dbReference>
<dbReference type="PROSITE" id="PS50267">
    <property type="entry name" value="NA_NEUROTRAN_SYMP_3"/>
    <property type="match status" value="1"/>
</dbReference>
<comment type="function">
    <text evidence="3 5 6 7 8 10">Mediates sodium- and chloride-dependent transport of dopamine (PubMed:1502198, PubMed:1765147, PubMed:1948034, PubMed:1948035, PubMed:8125921). Also mediates sodium- and chloride-dependent transport of norepinephrine (also known as noradrenaline) (PubMed:8125921). Regulator of light-dependent retinal hyaloid vessel regression, downstream of OPN5 signaling (By similarity).</text>
</comment>
<comment type="catalytic activity">
    <reaction evidence="5 6 7 8">
        <text>dopamine(out) + chloride(out) + Na(+)(out) = dopamine(in) + chloride(in) + Na(+)(in)</text>
        <dbReference type="Rhea" id="RHEA:70919"/>
        <dbReference type="ChEBI" id="CHEBI:17996"/>
        <dbReference type="ChEBI" id="CHEBI:29101"/>
        <dbReference type="ChEBI" id="CHEBI:59905"/>
    </reaction>
</comment>
<comment type="catalytic activity">
    <reaction evidence="10">
        <text>(R)-noradrenaline(out) + chloride(out) + Na(+)(out) = (R)-noradrenaline(in) + chloride(in) + Na(+)(in)</text>
        <dbReference type="Rhea" id="RHEA:70923"/>
        <dbReference type="ChEBI" id="CHEBI:17996"/>
        <dbReference type="ChEBI" id="CHEBI:29101"/>
        <dbReference type="ChEBI" id="CHEBI:72587"/>
    </reaction>
</comment>
<comment type="catalytic activity">
    <reaction evidence="10">
        <text>dopamine(out) + chloride(out) + 2 Na(+)(out) = dopamine(in) + chloride(in) + 2 Na(+)(in)</text>
        <dbReference type="Rhea" id="RHEA:70931"/>
        <dbReference type="ChEBI" id="CHEBI:17996"/>
        <dbReference type="ChEBI" id="CHEBI:29101"/>
        <dbReference type="ChEBI" id="CHEBI:59905"/>
    </reaction>
</comment>
<comment type="activity regulation">
    <text evidence="2 5 6 7 8">Inhibited by mazindol, cocaine, desipramine, GBR 12783 dihydrochloride, GBR 12909 dihydrochloride and nomifensine (PubMed:1502198, PubMed:1765147, PubMed:1948034, PubMed:1948035). Inhibited by zinc ions (By similarity).</text>
</comment>
<comment type="biophysicochemical properties">
    <kinetics>
        <KM evidence="10">17 uM for noradrenaline</KM>
        <KM evidence="10">5.2 uM for dopamine</KM>
        <KM evidence="8">885 nM for dopamine</KM>
        <KM evidence="7">1.19 uM for dopamine</KM>
        <KM evidence="6">300 nM for dopamine</KM>
        <KM evidence="5">1.63 uM for dopamine</KM>
        <Vmax evidence="10">300.0 pmol/min/mg enzyme for noradrenaline</Vmax>
        <Vmax evidence="10">300.0 pmol/min/mg enzyme for dopamine</Vmax>
    </kinetics>
</comment>
<comment type="subunit">
    <text evidence="2 3">Monomer (By similarity). Homooligomer; disulfide-linked (By similarity). Interacts with PRKCABP and TGFB1I1 (By similarity). Interacts (via N-terminus) with SYNGR3 (via N-terminus) (By similarity). Interacts with SLC18A2 (By similarity). Interacts with TOR1A (ATP-bound); TOR1A regulates SLC6A3 subcellular location (By similarity). Interacts with alpha-synuclein/SNCA (By similarity). Interacts with SEPTIN4 (By similarity).</text>
</comment>
<comment type="subcellular location">
    <subcellularLocation>
        <location evidence="2">Cell membrane</location>
        <topology evidence="2">Multi-pass membrane protein</topology>
    </subcellularLocation>
    <subcellularLocation>
        <location evidence="9">Cell projection</location>
        <location evidence="9">Neuron projection</location>
    </subcellularLocation>
    <subcellularLocation>
        <location evidence="2">Cell projection</location>
        <location evidence="2">Axon</location>
    </subcellularLocation>
    <text evidence="3 9">Localizes to neurite tips in neuronal cells (PubMed:32963038). Colocalizes with SEPTIN4 at axon terminals, especially at the varicosities (By similarity).</text>
</comment>
<comment type="tissue specificity">
    <text evidence="6 7">Brain (PubMed:1765147, PubMed:1948034). Expressed in the substantia nigra and ventral tegmental area, regions that contain dopaminergic cell bodies (PubMed:1765147).</text>
</comment>
<comment type="miscellaneous">
    <text>This protein is the target of psychomotor stimulants such as amphetamines or cocaine.</text>
</comment>
<comment type="similarity">
    <text evidence="11">Belongs to the sodium:neurotransmitter symporter (SNF) (TC 2.A.22) family. SLC6A3 subfamily.</text>
</comment>
<keyword id="KW-1003">Cell membrane</keyword>
<keyword id="KW-0966">Cell projection</keyword>
<keyword id="KW-1015">Disulfide bond</keyword>
<keyword id="KW-0325">Glycoprotein</keyword>
<keyword id="KW-0472">Membrane</keyword>
<keyword id="KW-0479">Metal-binding</keyword>
<keyword id="KW-0532">Neurotransmitter transport</keyword>
<keyword id="KW-1185">Reference proteome</keyword>
<keyword id="KW-0915">Sodium</keyword>
<keyword id="KW-0769">Symport</keyword>
<keyword id="KW-0812">Transmembrane</keyword>
<keyword id="KW-1133">Transmembrane helix</keyword>
<keyword id="KW-0813">Transport</keyword>
<proteinExistence type="evidence at protein level"/>
<feature type="chain" id="PRO_0000214754" description="Sodium-dependent dopamine transporter">
    <location>
        <begin position="1"/>
        <end position="619"/>
    </location>
</feature>
<feature type="topological domain" description="Cytoplasmic" evidence="2">
    <location>
        <begin position="1"/>
        <end position="56"/>
    </location>
</feature>
<feature type="transmembrane region" description="Discontinuously helical; Name=1" evidence="2">
    <location>
        <begin position="57"/>
        <end position="95"/>
    </location>
</feature>
<feature type="transmembrane region" description="Helical; Name=2" evidence="2">
    <location>
        <begin position="96"/>
        <end position="127"/>
    </location>
</feature>
<feature type="transmembrane region" description="Helical; Name=3" evidence="2">
    <location>
        <begin position="128"/>
        <end position="171"/>
    </location>
</feature>
<feature type="topological domain" description="Extracellular" evidence="2">
    <location>
        <begin position="172"/>
        <end position="235"/>
    </location>
</feature>
<feature type="transmembrane region" description="Helical; Name=4" evidence="2">
    <location>
        <begin position="236"/>
        <end position="255"/>
    </location>
</feature>
<feature type="transmembrane region" description="Helical; Name=5" evidence="2">
    <location>
        <begin position="256"/>
        <end position="286"/>
    </location>
</feature>
<feature type="topological domain" description="Extracellular" evidence="2">
    <location>
        <begin position="287"/>
        <end position="305"/>
    </location>
</feature>
<feature type="transmembrane region" description="Discontinuously helical; Name=6" evidence="2">
    <location>
        <begin position="306"/>
        <end position="334"/>
    </location>
</feature>
<feature type="transmembrane region" description="Helical; Name=7" evidence="2">
    <location>
        <begin position="335"/>
        <end position="375"/>
    </location>
</feature>
<feature type="topological domain" description="Extracellular" evidence="2">
    <location>
        <begin position="376"/>
        <end position="399"/>
    </location>
</feature>
<feature type="transmembrane region" description="Helical; Name=8" evidence="2">
    <location>
        <begin position="400"/>
        <end position="441"/>
    </location>
</feature>
<feature type="transmembrane region" description="Helical; Name=9" evidence="2">
    <location>
        <begin position="442"/>
        <end position="465"/>
    </location>
</feature>
<feature type="transmembrane region" description="Helical; Name=10" evidence="2">
    <location>
        <begin position="466"/>
        <end position="498"/>
    </location>
</feature>
<feature type="topological domain" description="Cytoplasmic" evidence="2">
    <location>
        <begin position="499"/>
        <end position="515"/>
    </location>
</feature>
<feature type="transmembrane region" description="Helical; Name=11" evidence="2">
    <location>
        <begin position="516"/>
        <end position="541"/>
    </location>
</feature>
<feature type="topological domain" description="Extracellular" evidence="2">
    <location>
        <begin position="542"/>
        <end position="552"/>
    </location>
</feature>
<feature type="transmembrane region" description="Helical; Name=12" evidence="2">
    <location>
        <begin position="553"/>
        <end position="582"/>
    </location>
</feature>
<feature type="topological domain" description="Cytoplasmic" evidence="2">
    <location>
        <begin position="583"/>
        <end position="619"/>
    </location>
</feature>
<feature type="region of interest" description="Interaction with TGFB1I1" evidence="1">
    <location>
        <begin position="560"/>
        <end position="589"/>
    </location>
</feature>
<feature type="binding site" evidence="2">
    <location>
        <position position="75"/>
    </location>
    <ligand>
        <name>Na(+)</name>
        <dbReference type="ChEBI" id="CHEBI:29101"/>
        <label>1</label>
    </ligand>
</feature>
<feature type="binding site" evidence="2">
    <location>
        <position position="77"/>
    </location>
    <ligand>
        <name>Na(+)</name>
        <dbReference type="ChEBI" id="CHEBI:29101"/>
        <label>2</label>
    </ligand>
</feature>
<feature type="binding site" evidence="2">
    <location>
        <position position="78"/>
    </location>
    <ligand>
        <name>Na(+)</name>
        <dbReference type="ChEBI" id="CHEBI:29101"/>
        <label>1</label>
    </ligand>
</feature>
<feature type="binding site" evidence="2">
    <location>
        <position position="79"/>
    </location>
    <ligand>
        <name>dopamine</name>
        <dbReference type="ChEBI" id="CHEBI:59905"/>
    </ligand>
</feature>
<feature type="binding site" evidence="2">
    <location>
        <position position="79"/>
    </location>
    <ligand>
        <name>Na(+)</name>
        <dbReference type="ChEBI" id="CHEBI:29101"/>
        <label>1</label>
    </ligand>
</feature>
<feature type="binding site" evidence="2">
    <location>
        <position position="79"/>
    </location>
    <ligand>
        <name>Na(+)</name>
        <dbReference type="ChEBI" id="CHEBI:29101"/>
        <label>2</label>
    </ligand>
</feature>
<feature type="binding site" evidence="2">
    <location>
        <position position="82"/>
    </location>
    <ligand>
        <name>Na(+)</name>
        <dbReference type="ChEBI" id="CHEBI:29101"/>
        <label>2</label>
    </ligand>
</feature>
<feature type="binding site" evidence="2">
    <location>
        <position position="149"/>
    </location>
    <ligand>
        <name>dopamine</name>
        <dbReference type="ChEBI" id="CHEBI:59905"/>
    </ligand>
</feature>
<feature type="binding site" evidence="2">
    <location>
        <position position="153"/>
    </location>
    <ligand>
        <name>dopamine</name>
        <dbReference type="ChEBI" id="CHEBI:59905"/>
    </ligand>
</feature>
<feature type="binding site" evidence="2">
    <location>
        <position position="316"/>
    </location>
    <ligand>
        <name>chloride</name>
        <dbReference type="ChEBI" id="CHEBI:17996"/>
    </ligand>
</feature>
<feature type="binding site" evidence="2">
    <location>
        <position position="319"/>
    </location>
    <ligand>
        <name>dopamine</name>
        <dbReference type="ChEBI" id="CHEBI:59905"/>
    </ligand>
</feature>
<feature type="binding site" evidence="2">
    <location>
        <position position="320"/>
    </location>
    <ligand>
        <name>chloride</name>
        <dbReference type="ChEBI" id="CHEBI:17996"/>
    </ligand>
</feature>
<feature type="binding site" evidence="2">
    <location>
        <position position="320"/>
    </location>
    <ligand>
        <name>Na(+)</name>
        <dbReference type="ChEBI" id="CHEBI:29101"/>
        <label>2</label>
    </ligand>
</feature>
<feature type="binding site" evidence="2">
    <location>
        <position position="352"/>
    </location>
    <ligand>
        <name>Na(+)</name>
        <dbReference type="ChEBI" id="CHEBI:29101"/>
        <label>2</label>
    </ligand>
</feature>
<feature type="binding site" evidence="2">
    <location>
        <position position="356"/>
    </location>
    <ligand>
        <name>chloride</name>
        <dbReference type="ChEBI" id="CHEBI:17996"/>
    </ligand>
</feature>
<feature type="binding site" evidence="2">
    <location>
        <position position="417"/>
    </location>
    <ligand>
        <name>Na(+)</name>
        <dbReference type="ChEBI" id="CHEBI:29101"/>
        <label>1</label>
    </ligand>
</feature>
<feature type="binding site" evidence="2">
    <location>
        <position position="420"/>
    </location>
    <ligand>
        <name>Na(+)</name>
        <dbReference type="ChEBI" id="CHEBI:29101"/>
        <label>1</label>
    </ligand>
</feature>
<feature type="binding site" evidence="2">
    <location>
        <position position="421"/>
    </location>
    <ligand>
        <name>dopamine</name>
        <dbReference type="ChEBI" id="CHEBI:59905"/>
    </ligand>
</feature>
<feature type="binding site" evidence="2">
    <location>
        <position position="421"/>
    </location>
    <ligand>
        <name>Na(+)</name>
        <dbReference type="ChEBI" id="CHEBI:29101"/>
        <label>1</label>
    </ligand>
</feature>
<feature type="binding site" evidence="2">
    <location>
        <position position="422"/>
    </location>
    <ligand>
        <name>dopamine</name>
        <dbReference type="ChEBI" id="CHEBI:59905"/>
    </ligand>
</feature>
<feature type="site" description="Contributes to high-affinity binding to cocaine" evidence="3">
    <location>
        <position position="105"/>
    </location>
</feature>
<feature type="glycosylation site" description="N-linked (GlcNAc...) asparagine" evidence="2">
    <location>
        <position position="181"/>
    </location>
</feature>
<feature type="glycosylation site" description="N-linked (GlcNAc...) asparagine" evidence="2">
    <location>
        <position position="188"/>
    </location>
</feature>
<feature type="glycosylation site" description="N-linked (GlcNAc...) asparagine" evidence="4">
    <location>
        <position position="196"/>
    </location>
</feature>
<feature type="glycosylation site" description="N-linked (GlcNAc...) asparagine" evidence="4">
    <location>
        <position position="204"/>
    </location>
</feature>
<feature type="disulfide bond" evidence="2">
    <location>
        <begin position="180"/>
        <end position="189"/>
    </location>
</feature>
<feature type="disulfide bond" description="Interchain" evidence="2">
    <location>
        <position position="305"/>
    </location>
</feature>
<feature type="mutagenesis site" description="Significant loss of dopamine transport activity." evidence="5">
    <original>D</original>
    <variation>A</variation>
    <variation>G</variation>
    <variation>E</variation>
    <location>
        <position position="79"/>
    </location>
</feature>
<feature type="mutagenesis site" description="Reduced dopamine transport activity; when associated with A-359." evidence="5">
    <original>S</original>
    <variation>A</variation>
    <location>
        <position position="356"/>
    </location>
</feature>
<feature type="mutagenesis site" description="Reduced dopamine transport activity; when associated with G-359." evidence="5">
    <original>S</original>
    <variation>G</variation>
    <location>
        <position position="356"/>
    </location>
</feature>
<feature type="mutagenesis site" description="Reduced dopamine transport activity; when associated with A-356." evidence="5">
    <original>S</original>
    <variation>A</variation>
    <location>
        <position position="359"/>
    </location>
</feature>
<feature type="mutagenesis site" description="Reduced dopamine transport activity; when associated with G-356." evidence="5">
    <original>S</original>
    <variation>G</variation>
    <location>
        <position position="359"/>
    </location>
</feature>
<feature type="mutagenesis site" description="No effect on dopamine transport activity; when associated with G-404." evidence="5">
    <original>S</original>
    <variation>A</variation>
    <location>
        <position position="403"/>
    </location>
</feature>
<feature type="mutagenesis site" description="No effect on dopamine transport activity; when associated with G-403." evidence="5">
    <original>S</original>
    <variation>A</variation>
    <location>
        <position position="404"/>
    </location>
</feature>
<feature type="sequence conflict" description="In Ref. 3; AAB21099." evidence="11" ref="3">
    <original>E</original>
    <variation>K</variation>
    <location>
        <position position="597"/>
    </location>
</feature>
<name>SC6A3_RAT</name>
<gene>
    <name type="primary">Slc6a3</name>
</gene>
<organism>
    <name type="scientific">Rattus norvegicus</name>
    <name type="common">Rat</name>
    <dbReference type="NCBI Taxonomy" id="10116"/>
    <lineage>
        <taxon>Eukaryota</taxon>
        <taxon>Metazoa</taxon>
        <taxon>Chordata</taxon>
        <taxon>Craniata</taxon>
        <taxon>Vertebrata</taxon>
        <taxon>Euteleostomi</taxon>
        <taxon>Mammalia</taxon>
        <taxon>Eutheria</taxon>
        <taxon>Euarchontoglires</taxon>
        <taxon>Glires</taxon>
        <taxon>Rodentia</taxon>
        <taxon>Myomorpha</taxon>
        <taxon>Muroidea</taxon>
        <taxon>Muridae</taxon>
        <taxon>Murinae</taxon>
        <taxon>Rattus</taxon>
    </lineage>
</organism>
<sequence>MSKSKCSVGPMSSVVAPAKESNAVGPREVELILVKEQNGVQLTNSTLINPPQTPVEAQERETWSKKIDFLLSVIGFAVDLANVWRFPYLCYKNGGGAFLVPYLLFMVIAGMPLFYMELALGQFNREGAAGVWKICPVLKGVGFTVILISFYVGFFYNVIIAWALHYFFSSFTMDLPWIHCNNTWNSPNCSDAHASNSSDGLGLNDTFGTTPAAEYFERGVLHLHQSRGIDDLGPPRWQLTACLVLVIVLLYFSLWKGVKTSGKVVWITATMPYVVLTALLLRGVTLPGAMDGIRAYLSVDFYRLCEASVWIDAATQVCFSLGVGFGVLIAFSSYNKFTNNCYRDAIITTSINSLTSFSSGFVVFSFLGYMAQKHNVPIRDVATDGPGLIFIIYPEAIATLPLSSAWAAVFFLMLLTLGIDSAMGGMESVITGLVDEFQLLHRHRELFTLGIVLATFLLSLFCVTNGGIYVFTLLDHFAAGTSILFGVLIEAIGVAWFYGVQQFSDDIKQMTGQRPNLYWRLCWKLVSPCFLLYVVVVSIVTFRPPHYGAYIFPDWANALGWIIATSSMAMVPIYATYKFCSLPGSFREKLAYAITPEKDHQLVDRGEVRQFTLRHWLLL</sequence>